<proteinExistence type="inferred from homology"/>
<dbReference type="EC" id="2.4.2.1" evidence="1"/>
<dbReference type="EC" id="2.4.2.2" evidence="1"/>
<dbReference type="EMBL" id="CP000116">
    <property type="protein sequence ID" value="AAZ97801.1"/>
    <property type="molecule type" value="Genomic_DNA"/>
</dbReference>
<dbReference type="RefSeq" id="WP_011312360.1">
    <property type="nucleotide sequence ID" value="NC_007404.1"/>
</dbReference>
<dbReference type="SMR" id="Q3SHT2"/>
<dbReference type="STRING" id="292415.Tbd_1848"/>
<dbReference type="KEGG" id="tbd:Tbd_1848"/>
<dbReference type="eggNOG" id="COG3123">
    <property type="taxonomic scope" value="Bacteria"/>
</dbReference>
<dbReference type="HOGENOM" id="CLU_157874_1_0_4"/>
<dbReference type="OrthoDB" id="9793848at2"/>
<dbReference type="Proteomes" id="UP000008291">
    <property type="component" value="Chromosome"/>
</dbReference>
<dbReference type="GO" id="GO:0005829">
    <property type="term" value="C:cytosol"/>
    <property type="evidence" value="ECO:0007669"/>
    <property type="project" value="TreeGrafter"/>
</dbReference>
<dbReference type="GO" id="GO:0047975">
    <property type="term" value="F:guanosine phosphorylase activity"/>
    <property type="evidence" value="ECO:0007669"/>
    <property type="project" value="UniProtKB-EC"/>
</dbReference>
<dbReference type="GO" id="GO:0004731">
    <property type="term" value="F:purine-nucleoside phosphorylase activity"/>
    <property type="evidence" value="ECO:0007669"/>
    <property type="project" value="UniProtKB-UniRule"/>
</dbReference>
<dbReference type="GO" id="GO:0009032">
    <property type="term" value="F:thymidine phosphorylase activity"/>
    <property type="evidence" value="ECO:0007669"/>
    <property type="project" value="UniProtKB-EC"/>
</dbReference>
<dbReference type="GO" id="GO:0004850">
    <property type="term" value="F:uridine phosphorylase activity"/>
    <property type="evidence" value="ECO:0007669"/>
    <property type="project" value="UniProtKB-EC"/>
</dbReference>
<dbReference type="CDD" id="cd20296">
    <property type="entry name" value="cupin_PpnP-like"/>
    <property type="match status" value="1"/>
</dbReference>
<dbReference type="Gene3D" id="2.60.120.10">
    <property type="entry name" value="Jelly Rolls"/>
    <property type="match status" value="1"/>
</dbReference>
<dbReference type="HAMAP" id="MF_01537">
    <property type="entry name" value="Nucleos_phosphorylase_PpnP"/>
    <property type="match status" value="1"/>
</dbReference>
<dbReference type="InterPro" id="IPR009664">
    <property type="entry name" value="Ppnp"/>
</dbReference>
<dbReference type="InterPro" id="IPR014710">
    <property type="entry name" value="RmlC-like_jellyroll"/>
</dbReference>
<dbReference type="InterPro" id="IPR011051">
    <property type="entry name" value="RmlC_Cupin_sf"/>
</dbReference>
<dbReference type="PANTHER" id="PTHR36540">
    <property type="entry name" value="PYRIMIDINE/PURINE NUCLEOSIDE PHOSPHORYLASE"/>
    <property type="match status" value="1"/>
</dbReference>
<dbReference type="PANTHER" id="PTHR36540:SF1">
    <property type="entry name" value="PYRIMIDINE_PURINE NUCLEOSIDE PHOSPHORYLASE"/>
    <property type="match status" value="1"/>
</dbReference>
<dbReference type="Pfam" id="PF06865">
    <property type="entry name" value="Ppnp"/>
    <property type="match status" value="1"/>
</dbReference>
<dbReference type="SUPFAM" id="SSF51182">
    <property type="entry name" value="RmlC-like cupins"/>
    <property type="match status" value="1"/>
</dbReference>
<gene>
    <name evidence="1" type="primary">ppnP</name>
    <name type="ordered locus">Tbd_1848</name>
</gene>
<protein>
    <recommendedName>
        <fullName evidence="1">Pyrimidine/purine nucleoside phosphorylase</fullName>
        <ecNumber evidence="1">2.4.2.1</ecNumber>
        <ecNumber evidence="1">2.4.2.2</ecNumber>
    </recommendedName>
    <alternativeName>
        <fullName evidence="1">Adenosine phosphorylase</fullName>
    </alternativeName>
    <alternativeName>
        <fullName evidence="1">Cytidine phosphorylase</fullName>
    </alternativeName>
    <alternativeName>
        <fullName evidence="1">Guanosine phosphorylase</fullName>
    </alternativeName>
    <alternativeName>
        <fullName evidence="1">Inosine phosphorylase</fullName>
    </alternativeName>
    <alternativeName>
        <fullName evidence="1">Thymidine phosphorylase</fullName>
    </alternativeName>
    <alternativeName>
        <fullName evidence="1">Uridine phosphorylase</fullName>
    </alternativeName>
    <alternativeName>
        <fullName evidence="1">Xanthosine phosphorylase</fullName>
    </alternativeName>
</protein>
<feature type="chain" id="PRO_0000292792" description="Pyrimidine/purine nucleoside phosphorylase">
    <location>
        <begin position="1"/>
        <end position="104"/>
    </location>
</feature>
<organism>
    <name type="scientific">Thiobacillus denitrificans (strain ATCC 25259 / T1)</name>
    <dbReference type="NCBI Taxonomy" id="292415"/>
    <lineage>
        <taxon>Bacteria</taxon>
        <taxon>Pseudomonadati</taxon>
        <taxon>Pseudomonadota</taxon>
        <taxon>Betaproteobacteria</taxon>
        <taxon>Nitrosomonadales</taxon>
        <taxon>Thiobacillaceae</taxon>
        <taxon>Thiobacillus</taxon>
    </lineage>
</organism>
<evidence type="ECO:0000255" key="1">
    <source>
        <dbReference type="HAMAP-Rule" id="MF_01537"/>
    </source>
</evidence>
<accession>Q3SHT2</accession>
<name>PPNP_THIDA</name>
<sequence>MSRFDNVAVTKQANVYFDGKCVSHTVEFADGTKKSVGVILPSTLTFNTGAPEVMETVAGACRVKLAGENEWKSYAAGQSFEVPANSSFEIEVAAEPYHYVCHFG</sequence>
<keyword id="KW-0328">Glycosyltransferase</keyword>
<keyword id="KW-1185">Reference proteome</keyword>
<keyword id="KW-0808">Transferase</keyword>
<comment type="function">
    <text evidence="1">Catalyzes the phosphorolysis of diverse nucleosides, yielding D-ribose 1-phosphate and the respective free bases. Can use uridine, adenosine, guanosine, cytidine, thymidine, inosine and xanthosine as substrates. Also catalyzes the reverse reactions.</text>
</comment>
<comment type="catalytic activity">
    <reaction evidence="1">
        <text>a purine D-ribonucleoside + phosphate = a purine nucleobase + alpha-D-ribose 1-phosphate</text>
        <dbReference type="Rhea" id="RHEA:19805"/>
        <dbReference type="ChEBI" id="CHEBI:26386"/>
        <dbReference type="ChEBI" id="CHEBI:43474"/>
        <dbReference type="ChEBI" id="CHEBI:57720"/>
        <dbReference type="ChEBI" id="CHEBI:142355"/>
        <dbReference type="EC" id="2.4.2.1"/>
    </reaction>
</comment>
<comment type="catalytic activity">
    <reaction evidence="1">
        <text>adenosine + phosphate = alpha-D-ribose 1-phosphate + adenine</text>
        <dbReference type="Rhea" id="RHEA:27642"/>
        <dbReference type="ChEBI" id="CHEBI:16335"/>
        <dbReference type="ChEBI" id="CHEBI:16708"/>
        <dbReference type="ChEBI" id="CHEBI:43474"/>
        <dbReference type="ChEBI" id="CHEBI:57720"/>
        <dbReference type="EC" id="2.4.2.1"/>
    </reaction>
</comment>
<comment type="catalytic activity">
    <reaction evidence="1">
        <text>cytidine + phosphate = cytosine + alpha-D-ribose 1-phosphate</text>
        <dbReference type="Rhea" id="RHEA:52540"/>
        <dbReference type="ChEBI" id="CHEBI:16040"/>
        <dbReference type="ChEBI" id="CHEBI:17562"/>
        <dbReference type="ChEBI" id="CHEBI:43474"/>
        <dbReference type="ChEBI" id="CHEBI:57720"/>
        <dbReference type="EC" id="2.4.2.2"/>
    </reaction>
</comment>
<comment type="catalytic activity">
    <reaction evidence="1">
        <text>guanosine + phosphate = alpha-D-ribose 1-phosphate + guanine</text>
        <dbReference type="Rhea" id="RHEA:13233"/>
        <dbReference type="ChEBI" id="CHEBI:16235"/>
        <dbReference type="ChEBI" id="CHEBI:16750"/>
        <dbReference type="ChEBI" id="CHEBI:43474"/>
        <dbReference type="ChEBI" id="CHEBI:57720"/>
        <dbReference type="EC" id="2.4.2.1"/>
    </reaction>
</comment>
<comment type="catalytic activity">
    <reaction evidence="1">
        <text>inosine + phosphate = alpha-D-ribose 1-phosphate + hypoxanthine</text>
        <dbReference type="Rhea" id="RHEA:27646"/>
        <dbReference type="ChEBI" id="CHEBI:17368"/>
        <dbReference type="ChEBI" id="CHEBI:17596"/>
        <dbReference type="ChEBI" id="CHEBI:43474"/>
        <dbReference type="ChEBI" id="CHEBI:57720"/>
        <dbReference type="EC" id="2.4.2.1"/>
    </reaction>
</comment>
<comment type="catalytic activity">
    <reaction evidence="1">
        <text>thymidine + phosphate = 2-deoxy-alpha-D-ribose 1-phosphate + thymine</text>
        <dbReference type="Rhea" id="RHEA:16037"/>
        <dbReference type="ChEBI" id="CHEBI:17748"/>
        <dbReference type="ChEBI" id="CHEBI:17821"/>
        <dbReference type="ChEBI" id="CHEBI:43474"/>
        <dbReference type="ChEBI" id="CHEBI:57259"/>
        <dbReference type="EC" id="2.4.2.2"/>
    </reaction>
</comment>
<comment type="catalytic activity">
    <reaction evidence="1">
        <text>uridine + phosphate = alpha-D-ribose 1-phosphate + uracil</text>
        <dbReference type="Rhea" id="RHEA:24388"/>
        <dbReference type="ChEBI" id="CHEBI:16704"/>
        <dbReference type="ChEBI" id="CHEBI:17568"/>
        <dbReference type="ChEBI" id="CHEBI:43474"/>
        <dbReference type="ChEBI" id="CHEBI:57720"/>
        <dbReference type="EC" id="2.4.2.2"/>
    </reaction>
</comment>
<comment type="catalytic activity">
    <reaction evidence="1">
        <text>xanthosine + phosphate = alpha-D-ribose 1-phosphate + xanthine</text>
        <dbReference type="Rhea" id="RHEA:27638"/>
        <dbReference type="ChEBI" id="CHEBI:17712"/>
        <dbReference type="ChEBI" id="CHEBI:18107"/>
        <dbReference type="ChEBI" id="CHEBI:43474"/>
        <dbReference type="ChEBI" id="CHEBI:57720"/>
        <dbReference type="EC" id="2.4.2.1"/>
    </reaction>
</comment>
<comment type="similarity">
    <text evidence="1">Belongs to the nucleoside phosphorylase PpnP family.</text>
</comment>
<reference key="1">
    <citation type="journal article" date="2006" name="J. Bacteriol.">
        <title>The genome sequence of the obligately chemolithoautotrophic, facultatively anaerobic bacterium Thiobacillus denitrificans.</title>
        <authorList>
            <person name="Beller H.R."/>
            <person name="Chain P.S."/>
            <person name="Letain T.E."/>
            <person name="Chakicherla A."/>
            <person name="Larimer F.W."/>
            <person name="Richardson P.M."/>
            <person name="Coleman M.A."/>
            <person name="Wood A.P."/>
            <person name="Kelly D.P."/>
        </authorList>
    </citation>
    <scope>NUCLEOTIDE SEQUENCE [LARGE SCALE GENOMIC DNA]</scope>
    <source>
        <strain>ATCC 25259 / T1</strain>
    </source>
</reference>